<sequence>MAGSGCAWGAEPPRFLEAFGRLWQVQSRLGSGSSASVYRVRCCGNPGSPPGALKQFLPPGTTGAAASAAEYGFRKERAALEQLQGHRNIVTLYGVFTIHFSPNVPSRCLLLELLDVSVSELLLYSSHQGCSMWMIQHCARDVLEALAFLHHEGYVHADLKPRNILWSAENECFKLIDFGLSFKEGNQDVKYIQTDGYRAPEAELQNCLAQAGLQSDTECTSAVDLWSLGIILLEMFSGMKLKHTVRSQEWKANSSAIIDHIFASKAVVNAAIPAYHLRDLIKSMLHDDPSRRIPAEMALCSPFFSIPFAPHIEDLVMLPTPVLRLLNVLDDDYLENEEEYEDVVEDVKEECQKYGPVVSLLVPKENPGRGQVFVEYANAGDSKAAQKLLTGRMFDGKFVVATFYPLSAYKRGYLYQTLL</sequence>
<dbReference type="EC" id="2.7.11.1"/>
<dbReference type="EMBL" id="CR858137">
    <property type="protein sequence ID" value="CAH90376.1"/>
    <property type="molecule type" value="mRNA"/>
</dbReference>
<dbReference type="RefSeq" id="NP_001125183.1">
    <property type="nucleotide sequence ID" value="NM_001131711.1"/>
</dbReference>
<dbReference type="SMR" id="Q5RCY1"/>
<dbReference type="FunCoup" id="Q5RCY1">
    <property type="interactions" value="1333"/>
</dbReference>
<dbReference type="STRING" id="9601.ENSPPYP00000000680"/>
<dbReference type="Ensembl" id="ENSPPYT00000051542.1">
    <property type="protein sequence ID" value="ENSPPYP00000044331.1"/>
    <property type="gene ID" value="ENSPPYG00000000582.3"/>
</dbReference>
<dbReference type="GeneID" id="100172072"/>
<dbReference type="KEGG" id="pon:100172072"/>
<dbReference type="CTD" id="127933"/>
<dbReference type="eggNOG" id="KOG0032">
    <property type="taxonomic scope" value="Eukaryota"/>
</dbReference>
<dbReference type="GeneTree" id="ENSGT00940000157769"/>
<dbReference type="InParanoid" id="Q5RCY1"/>
<dbReference type="OMA" id="VMATFYP"/>
<dbReference type="OrthoDB" id="10266058at2759"/>
<dbReference type="Proteomes" id="UP000001595">
    <property type="component" value="Chromosome 1"/>
</dbReference>
<dbReference type="GO" id="GO:0030424">
    <property type="term" value="C:axon"/>
    <property type="evidence" value="ECO:0007669"/>
    <property type="project" value="Ensembl"/>
</dbReference>
<dbReference type="GO" id="GO:0032839">
    <property type="term" value="C:dendrite cytoplasm"/>
    <property type="evidence" value="ECO:0007669"/>
    <property type="project" value="Ensembl"/>
</dbReference>
<dbReference type="GO" id="GO:0071598">
    <property type="term" value="C:neuronal ribonucleoprotein granule"/>
    <property type="evidence" value="ECO:0007669"/>
    <property type="project" value="Ensembl"/>
</dbReference>
<dbReference type="GO" id="GO:0005654">
    <property type="term" value="C:nucleoplasm"/>
    <property type="evidence" value="ECO:0007669"/>
    <property type="project" value="Ensembl"/>
</dbReference>
<dbReference type="GO" id="GO:0005524">
    <property type="term" value="F:ATP binding"/>
    <property type="evidence" value="ECO:0007669"/>
    <property type="project" value="UniProtKB-KW"/>
</dbReference>
<dbReference type="GO" id="GO:0106310">
    <property type="term" value="F:protein serine kinase activity"/>
    <property type="evidence" value="ECO:0007669"/>
    <property type="project" value="RHEA"/>
</dbReference>
<dbReference type="GO" id="GO:0004674">
    <property type="term" value="F:protein serine/threonine kinase activity"/>
    <property type="evidence" value="ECO:0007669"/>
    <property type="project" value="UniProtKB-KW"/>
</dbReference>
<dbReference type="GO" id="GO:0043021">
    <property type="term" value="F:ribonucleoprotein complex binding"/>
    <property type="evidence" value="ECO:0007669"/>
    <property type="project" value="Ensembl"/>
</dbReference>
<dbReference type="GO" id="GO:0003723">
    <property type="term" value="F:RNA binding"/>
    <property type="evidence" value="ECO:0007669"/>
    <property type="project" value="UniProtKB-KW"/>
</dbReference>
<dbReference type="GO" id="GO:0031175">
    <property type="term" value="P:neuron projection development"/>
    <property type="evidence" value="ECO:0007669"/>
    <property type="project" value="Ensembl"/>
</dbReference>
<dbReference type="GO" id="GO:0045948">
    <property type="term" value="P:positive regulation of translational initiation"/>
    <property type="evidence" value="ECO:0007669"/>
    <property type="project" value="Ensembl"/>
</dbReference>
<dbReference type="GO" id="GO:0051726">
    <property type="term" value="P:regulation of cell cycle"/>
    <property type="evidence" value="ECO:0007669"/>
    <property type="project" value="Ensembl"/>
</dbReference>
<dbReference type="GO" id="GO:0046825">
    <property type="term" value="P:regulation of protein export from nucleus"/>
    <property type="evidence" value="ECO:0007669"/>
    <property type="project" value="Ensembl"/>
</dbReference>
<dbReference type="CDD" id="cd14020">
    <property type="entry name" value="STKc_KIS"/>
    <property type="match status" value="1"/>
</dbReference>
<dbReference type="FunFam" id="1.10.510.10:FF:000322">
    <property type="entry name" value="Serine/threonine-protein kinase Kist isoform 1"/>
    <property type="match status" value="1"/>
</dbReference>
<dbReference type="FunFam" id="3.30.200.20:FF:000324">
    <property type="entry name" value="Serine/threonine-protein kinase Kist isoform 1"/>
    <property type="match status" value="1"/>
</dbReference>
<dbReference type="FunFam" id="3.30.70.330:FF:000241">
    <property type="entry name" value="Serine/threonine-protein kinase Kist isoform 1"/>
    <property type="match status" value="1"/>
</dbReference>
<dbReference type="Gene3D" id="3.30.70.330">
    <property type="match status" value="1"/>
</dbReference>
<dbReference type="Gene3D" id="3.30.200.20">
    <property type="entry name" value="Phosphorylase Kinase, domain 1"/>
    <property type="match status" value="1"/>
</dbReference>
<dbReference type="Gene3D" id="1.10.510.10">
    <property type="entry name" value="Transferase(Phosphotransferase) domain 1"/>
    <property type="match status" value="1"/>
</dbReference>
<dbReference type="InterPro" id="IPR011009">
    <property type="entry name" value="Kinase-like_dom_sf"/>
</dbReference>
<dbReference type="InterPro" id="IPR012677">
    <property type="entry name" value="Nucleotide-bd_a/b_plait_sf"/>
</dbReference>
<dbReference type="InterPro" id="IPR000719">
    <property type="entry name" value="Prot_kinase_dom"/>
</dbReference>
<dbReference type="InterPro" id="IPR035979">
    <property type="entry name" value="RBD_domain_sf"/>
</dbReference>
<dbReference type="InterPro" id="IPR000504">
    <property type="entry name" value="RRM_dom"/>
</dbReference>
<dbReference type="InterPro" id="IPR034372">
    <property type="entry name" value="UHMK1"/>
</dbReference>
<dbReference type="PANTHER" id="PTHR46962">
    <property type="entry name" value="SERINE/THREONINE-PROTEIN KINASE KIST"/>
    <property type="match status" value="1"/>
</dbReference>
<dbReference type="PANTHER" id="PTHR46962:SF1">
    <property type="entry name" value="SERINE_THREONINE-PROTEIN KINASE KIST"/>
    <property type="match status" value="1"/>
</dbReference>
<dbReference type="Pfam" id="PF00069">
    <property type="entry name" value="Pkinase"/>
    <property type="match status" value="1"/>
</dbReference>
<dbReference type="Pfam" id="PF00076">
    <property type="entry name" value="RRM_1"/>
    <property type="match status" value="1"/>
</dbReference>
<dbReference type="SMART" id="SM00360">
    <property type="entry name" value="RRM"/>
    <property type="match status" value="1"/>
</dbReference>
<dbReference type="SMART" id="SM00220">
    <property type="entry name" value="S_TKc"/>
    <property type="match status" value="1"/>
</dbReference>
<dbReference type="SUPFAM" id="SSF56112">
    <property type="entry name" value="Protein kinase-like (PK-like)"/>
    <property type="match status" value="1"/>
</dbReference>
<dbReference type="SUPFAM" id="SSF54928">
    <property type="entry name" value="RNA-binding domain, RBD"/>
    <property type="match status" value="1"/>
</dbReference>
<dbReference type="PROSITE" id="PS50011">
    <property type="entry name" value="PROTEIN_KINASE_DOM"/>
    <property type="match status" value="1"/>
</dbReference>
<dbReference type="PROSITE" id="PS50102">
    <property type="entry name" value="RRM"/>
    <property type="match status" value="1"/>
</dbReference>
<name>UHMK1_PONAB</name>
<protein>
    <recommendedName>
        <fullName>Serine/threonine-protein kinase Kist</fullName>
        <ecNumber>2.7.11.1</ecNumber>
    </recommendedName>
    <alternativeName>
        <fullName>Kinase interacting with stathmin</fullName>
    </alternativeName>
    <alternativeName>
        <fullName>PAM COOH-terminal interactor protein 2</fullName>
        <shortName>P-CIP2</shortName>
    </alternativeName>
    <alternativeName>
        <fullName>U2AF homology motif kinase 1</fullName>
    </alternativeName>
</protein>
<accession>Q5RCY1</accession>
<proteinExistence type="evidence at transcript level"/>
<gene>
    <name type="primary">UHMK1</name>
    <name type="synonym">KIST</name>
</gene>
<evidence type="ECO:0000250" key="1"/>
<evidence type="ECO:0000255" key="2">
    <source>
        <dbReference type="PROSITE-ProRule" id="PRU00159"/>
    </source>
</evidence>
<evidence type="ECO:0000255" key="3">
    <source>
        <dbReference type="PROSITE-ProRule" id="PRU00176"/>
    </source>
</evidence>
<organism>
    <name type="scientific">Pongo abelii</name>
    <name type="common">Sumatran orangutan</name>
    <name type="synonym">Pongo pygmaeus abelii</name>
    <dbReference type="NCBI Taxonomy" id="9601"/>
    <lineage>
        <taxon>Eukaryota</taxon>
        <taxon>Metazoa</taxon>
        <taxon>Chordata</taxon>
        <taxon>Craniata</taxon>
        <taxon>Vertebrata</taxon>
        <taxon>Euteleostomi</taxon>
        <taxon>Mammalia</taxon>
        <taxon>Eutheria</taxon>
        <taxon>Euarchontoglires</taxon>
        <taxon>Primates</taxon>
        <taxon>Haplorrhini</taxon>
        <taxon>Catarrhini</taxon>
        <taxon>Hominidae</taxon>
        <taxon>Pongo</taxon>
    </lineage>
</organism>
<feature type="chain" id="PRO_0000307370" description="Serine/threonine-protein kinase Kist">
    <location>
        <begin position="1"/>
        <end position="419"/>
    </location>
</feature>
<feature type="domain" description="Protein kinase" evidence="2">
    <location>
        <begin position="23"/>
        <end position="304"/>
    </location>
</feature>
<feature type="domain" description="RRM" evidence="3">
    <location>
        <begin position="324"/>
        <end position="406"/>
    </location>
</feature>
<feature type="active site" description="Proton acceptor" evidence="2">
    <location>
        <position position="141"/>
    </location>
</feature>
<feature type="active site" description="Proton acceptor" evidence="2">
    <location>
        <position position="158"/>
    </location>
</feature>
<feature type="binding site" evidence="2">
    <location>
        <begin position="29"/>
        <end position="37"/>
    </location>
    <ligand>
        <name>ATP</name>
        <dbReference type="ChEBI" id="CHEBI:30616"/>
    </ligand>
</feature>
<feature type="binding site" evidence="2">
    <location>
        <position position="54"/>
    </location>
    <ligand>
        <name>ATP</name>
        <dbReference type="ChEBI" id="CHEBI:30616"/>
    </ligand>
</feature>
<keyword id="KW-0067">ATP-binding</keyword>
<keyword id="KW-0418">Kinase</keyword>
<keyword id="KW-0547">Nucleotide-binding</keyword>
<keyword id="KW-0539">Nucleus</keyword>
<keyword id="KW-1185">Reference proteome</keyword>
<keyword id="KW-0694">RNA-binding</keyword>
<keyword id="KW-0723">Serine/threonine-protein kinase</keyword>
<keyword id="KW-0808">Transferase</keyword>
<comment type="function">
    <text evidence="1">Upon serum stimulation, phosphorylates CDKN1B/p27Kip1, thus controlling CDKN1B subcellular location and cell cycle progression in G1 phase. May be involved in trafficking and/or processing of RNA (By similarity).</text>
</comment>
<comment type="catalytic activity">
    <reaction>
        <text>L-seryl-[protein] + ATP = O-phospho-L-seryl-[protein] + ADP + H(+)</text>
        <dbReference type="Rhea" id="RHEA:17989"/>
        <dbReference type="Rhea" id="RHEA-COMP:9863"/>
        <dbReference type="Rhea" id="RHEA-COMP:11604"/>
        <dbReference type="ChEBI" id="CHEBI:15378"/>
        <dbReference type="ChEBI" id="CHEBI:29999"/>
        <dbReference type="ChEBI" id="CHEBI:30616"/>
        <dbReference type="ChEBI" id="CHEBI:83421"/>
        <dbReference type="ChEBI" id="CHEBI:456216"/>
        <dbReference type="EC" id="2.7.11.1"/>
    </reaction>
</comment>
<comment type="catalytic activity">
    <reaction>
        <text>L-threonyl-[protein] + ATP = O-phospho-L-threonyl-[protein] + ADP + H(+)</text>
        <dbReference type="Rhea" id="RHEA:46608"/>
        <dbReference type="Rhea" id="RHEA-COMP:11060"/>
        <dbReference type="Rhea" id="RHEA-COMP:11605"/>
        <dbReference type="ChEBI" id="CHEBI:15378"/>
        <dbReference type="ChEBI" id="CHEBI:30013"/>
        <dbReference type="ChEBI" id="CHEBI:30616"/>
        <dbReference type="ChEBI" id="CHEBI:61977"/>
        <dbReference type="ChEBI" id="CHEBI:456216"/>
        <dbReference type="EC" id="2.7.11.1"/>
    </reaction>
</comment>
<comment type="subunit">
    <text evidence="1">Interacts with stathmin, PAM and CDKN1B/p27Kip1.</text>
</comment>
<comment type="subcellular location">
    <subcellularLocation>
        <location>Nucleus</location>
    </subcellularLocation>
    <text evidence="1">Mostly nuclear.</text>
</comment>
<comment type="similarity">
    <text evidence="2">Belongs to the protein kinase superfamily. Ser/Thr protein kinase family.</text>
</comment>
<reference key="1">
    <citation type="submission" date="2004-11" db="EMBL/GenBank/DDBJ databases">
        <authorList>
            <consortium name="The German cDNA consortium"/>
        </authorList>
    </citation>
    <scope>NUCLEOTIDE SEQUENCE [LARGE SCALE MRNA]</scope>
    <source>
        <tissue>Kidney</tissue>
    </source>
</reference>